<reference key="1">
    <citation type="journal article" date="2002" name="Proc. Natl. Acad. Sci. U.S.A.">
        <title>The genome sequence of the facultative intracellular pathogen Brucella melitensis.</title>
        <authorList>
            <person name="DelVecchio V.G."/>
            <person name="Kapatral V."/>
            <person name="Redkar R.J."/>
            <person name="Patra G."/>
            <person name="Mujer C."/>
            <person name="Los T."/>
            <person name="Ivanova N."/>
            <person name="Anderson I."/>
            <person name="Bhattacharyya A."/>
            <person name="Lykidis A."/>
            <person name="Reznik G."/>
            <person name="Jablonski L."/>
            <person name="Larsen N."/>
            <person name="D'Souza M."/>
            <person name="Bernal A."/>
            <person name="Mazur M."/>
            <person name="Goltsman E."/>
            <person name="Selkov E."/>
            <person name="Elzer P.H."/>
            <person name="Hagius S."/>
            <person name="O'Callaghan D."/>
            <person name="Letesson J.-J."/>
            <person name="Haselkorn R."/>
            <person name="Kyrpides N.C."/>
            <person name="Overbeek R."/>
        </authorList>
    </citation>
    <scope>NUCLEOTIDE SEQUENCE [LARGE SCALE GENOMIC DNA]</scope>
    <source>
        <strain>ATCC 23456 / CCUG 17765 / NCTC 10094 / 16M</strain>
    </source>
</reference>
<name>SAHH_BRUME</name>
<proteinExistence type="inferred from homology"/>
<keyword id="KW-0963">Cytoplasm</keyword>
<keyword id="KW-0378">Hydrolase</keyword>
<keyword id="KW-0520">NAD</keyword>
<keyword id="KW-0554">One-carbon metabolism</keyword>
<organism>
    <name type="scientific">Brucella melitensis biotype 1 (strain ATCC 23456 / CCUG 17765 / NCTC 10094 / 16M)</name>
    <dbReference type="NCBI Taxonomy" id="224914"/>
    <lineage>
        <taxon>Bacteria</taxon>
        <taxon>Pseudomonadati</taxon>
        <taxon>Pseudomonadota</taxon>
        <taxon>Alphaproteobacteria</taxon>
        <taxon>Hyphomicrobiales</taxon>
        <taxon>Brucellaceae</taxon>
        <taxon>Brucella/Ochrobactrum group</taxon>
        <taxon>Brucella</taxon>
    </lineage>
</organism>
<evidence type="ECO:0000255" key="1">
    <source>
        <dbReference type="HAMAP-Rule" id="MF_00563"/>
    </source>
</evidence>
<evidence type="ECO:0000305" key="2"/>
<feature type="chain" id="PRO_0000116951" description="Adenosylhomocysteinase">
    <location>
        <begin position="1"/>
        <end position="466"/>
    </location>
</feature>
<feature type="binding site" evidence="1">
    <location>
        <position position="57"/>
    </location>
    <ligand>
        <name>substrate</name>
    </ligand>
</feature>
<feature type="binding site" evidence="1">
    <location>
        <position position="132"/>
    </location>
    <ligand>
        <name>substrate</name>
    </ligand>
</feature>
<feature type="binding site" evidence="1">
    <location>
        <position position="192"/>
    </location>
    <ligand>
        <name>substrate</name>
    </ligand>
</feature>
<feature type="binding site" evidence="1">
    <location>
        <begin position="193"/>
        <end position="195"/>
    </location>
    <ligand>
        <name>NAD(+)</name>
        <dbReference type="ChEBI" id="CHEBI:57540"/>
    </ligand>
</feature>
<feature type="binding site" evidence="1">
    <location>
        <position position="222"/>
    </location>
    <ligand>
        <name>substrate</name>
    </ligand>
</feature>
<feature type="binding site" evidence="1">
    <location>
        <position position="226"/>
    </location>
    <ligand>
        <name>substrate</name>
    </ligand>
</feature>
<feature type="binding site" evidence="1">
    <location>
        <position position="227"/>
    </location>
    <ligand>
        <name>NAD(+)</name>
        <dbReference type="ChEBI" id="CHEBI:57540"/>
    </ligand>
</feature>
<feature type="binding site" evidence="1">
    <location>
        <begin position="256"/>
        <end position="261"/>
    </location>
    <ligand>
        <name>NAD(+)</name>
        <dbReference type="ChEBI" id="CHEBI:57540"/>
    </ligand>
</feature>
<feature type="binding site" evidence="1">
    <location>
        <position position="279"/>
    </location>
    <ligand>
        <name>NAD(+)</name>
        <dbReference type="ChEBI" id="CHEBI:57540"/>
    </ligand>
</feature>
<feature type="binding site" evidence="1">
    <location>
        <position position="314"/>
    </location>
    <ligand>
        <name>NAD(+)</name>
        <dbReference type="ChEBI" id="CHEBI:57540"/>
    </ligand>
</feature>
<feature type="binding site" evidence="1">
    <location>
        <begin position="335"/>
        <end position="337"/>
    </location>
    <ligand>
        <name>NAD(+)</name>
        <dbReference type="ChEBI" id="CHEBI:57540"/>
    </ligand>
</feature>
<feature type="binding site" evidence="1">
    <location>
        <position position="380"/>
    </location>
    <ligand>
        <name>NAD(+)</name>
        <dbReference type="ChEBI" id="CHEBI:57540"/>
    </ligand>
</feature>
<sequence length="466" mass="50819">MTASQDFVVKDISLADWGRRELDIAETEMPGLMAAREEFGKSQPLKGARISGSLHMTIQTAVLIETLKVLGAEVRWASCNIFSTQDHAAAAIAATGTPVFAVKGETLEEYWTYTDQIFQWPDGEPSNMILDDGGDATMYILIGARAEAGEDVLSNPQSEEEEVLFAQIKKRMAATPGFFTKQRAAIKGVTEETTTGVNRLYQLQKKGLLPFPAINVNDSVTKSKFDNKYGCKESLVDGIRRGTDVMMAGKVAVVCGYGDVGKGSAQSLAGAGARVKVTEVDPICALQAAMDGFEVVTLDDAASTADIVVTTTGNKDVITIDHMRKMKDMCIVGNIGHFDNEIQVAALRNLKWTNVKPQVDLIEFPDGKRLILLSEGRLLNLGNATGHPSFVMSASFTNQVLGQIELFTRTDAYKNEVYVLPKHLDEKVARLHLDKLGAKLTVLSEEQAAYIGVTPQGPFKSEHYRY</sequence>
<accession>Q8YE49</accession>
<dbReference type="EC" id="3.13.2.1" evidence="1"/>
<dbReference type="EMBL" id="AE008917">
    <property type="protein sequence ID" value="AAL53210.1"/>
    <property type="status" value="ALT_INIT"/>
    <property type="molecule type" value="Genomic_DNA"/>
</dbReference>
<dbReference type="PIR" id="AG3505">
    <property type="entry name" value="AG3505"/>
</dbReference>
<dbReference type="RefSeq" id="WP_004684548.1">
    <property type="nucleotide sequence ID" value="NZ_GG703778.1"/>
</dbReference>
<dbReference type="SMR" id="Q8YE49"/>
<dbReference type="GeneID" id="29594914"/>
<dbReference type="KEGG" id="bme:BMEI2029"/>
<dbReference type="KEGG" id="bmel:DK63_1463"/>
<dbReference type="PATRIC" id="fig|224914.52.peg.1540"/>
<dbReference type="eggNOG" id="COG0499">
    <property type="taxonomic scope" value="Bacteria"/>
</dbReference>
<dbReference type="PhylomeDB" id="Q8YE49"/>
<dbReference type="UniPathway" id="UPA00314">
    <property type="reaction ID" value="UER00076"/>
</dbReference>
<dbReference type="Proteomes" id="UP000000419">
    <property type="component" value="Chromosome I"/>
</dbReference>
<dbReference type="GO" id="GO:0005829">
    <property type="term" value="C:cytosol"/>
    <property type="evidence" value="ECO:0007669"/>
    <property type="project" value="TreeGrafter"/>
</dbReference>
<dbReference type="GO" id="GO:0004013">
    <property type="term" value="F:adenosylhomocysteinase activity"/>
    <property type="evidence" value="ECO:0007669"/>
    <property type="project" value="UniProtKB-UniRule"/>
</dbReference>
<dbReference type="GO" id="GO:0071269">
    <property type="term" value="P:L-homocysteine biosynthetic process"/>
    <property type="evidence" value="ECO:0007669"/>
    <property type="project" value="UniProtKB-UniRule"/>
</dbReference>
<dbReference type="GO" id="GO:0006730">
    <property type="term" value="P:one-carbon metabolic process"/>
    <property type="evidence" value="ECO:0007669"/>
    <property type="project" value="UniProtKB-KW"/>
</dbReference>
<dbReference type="GO" id="GO:0033353">
    <property type="term" value="P:S-adenosylmethionine cycle"/>
    <property type="evidence" value="ECO:0007669"/>
    <property type="project" value="TreeGrafter"/>
</dbReference>
<dbReference type="CDD" id="cd00401">
    <property type="entry name" value="SAHH"/>
    <property type="match status" value="1"/>
</dbReference>
<dbReference type="FunFam" id="3.40.50.720:FF:000004">
    <property type="entry name" value="Adenosylhomocysteinase"/>
    <property type="match status" value="1"/>
</dbReference>
<dbReference type="Gene3D" id="3.40.50.1480">
    <property type="entry name" value="Adenosylhomocysteinase-like"/>
    <property type="match status" value="1"/>
</dbReference>
<dbReference type="Gene3D" id="3.40.50.720">
    <property type="entry name" value="NAD(P)-binding Rossmann-like Domain"/>
    <property type="match status" value="1"/>
</dbReference>
<dbReference type="HAMAP" id="MF_00563">
    <property type="entry name" value="AdoHcyase"/>
    <property type="match status" value="1"/>
</dbReference>
<dbReference type="InterPro" id="IPR042172">
    <property type="entry name" value="Adenosylhomocyst_ase-like_sf"/>
</dbReference>
<dbReference type="InterPro" id="IPR000043">
    <property type="entry name" value="Adenosylhomocysteinase-like"/>
</dbReference>
<dbReference type="InterPro" id="IPR015878">
    <property type="entry name" value="Ado_hCys_hydrolase_NAD-bd"/>
</dbReference>
<dbReference type="InterPro" id="IPR036291">
    <property type="entry name" value="NAD(P)-bd_dom_sf"/>
</dbReference>
<dbReference type="InterPro" id="IPR020082">
    <property type="entry name" value="S-Ado-L-homoCys_hydrolase_CS"/>
</dbReference>
<dbReference type="NCBIfam" id="TIGR00936">
    <property type="entry name" value="ahcY"/>
    <property type="match status" value="1"/>
</dbReference>
<dbReference type="NCBIfam" id="NF004005">
    <property type="entry name" value="PRK05476.2-3"/>
    <property type="match status" value="1"/>
</dbReference>
<dbReference type="PANTHER" id="PTHR23420">
    <property type="entry name" value="ADENOSYLHOMOCYSTEINASE"/>
    <property type="match status" value="1"/>
</dbReference>
<dbReference type="PANTHER" id="PTHR23420:SF0">
    <property type="entry name" value="ADENOSYLHOMOCYSTEINASE"/>
    <property type="match status" value="1"/>
</dbReference>
<dbReference type="Pfam" id="PF05221">
    <property type="entry name" value="AdoHcyase"/>
    <property type="match status" value="1"/>
</dbReference>
<dbReference type="Pfam" id="PF00670">
    <property type="entry name" value="AdoHcyase_NAD"/>
    <property type="match status" value="1"/>
</dbReference>
<dbReference type="PIRSF" id="PIRSF001109">
    <property type="entry name" value="Ad_hcy_hydrolase"/>
    <property type="match status" value="1"/>
</dbReference>
<dbReference type="SMART" id="SM00996">
    <property type="entry name" value="AdoHcyase"/>
    <property type="match status" value="1"/>
</dbReference>
<dbReference type="SMART" id="SM00997">
    <property type="entry name" value="AdoHcyase_NAD"/>
    <property type="match status" value="1"/>
</dbReference>
<dbReference type="SUPFAM" id="SSF52283">
    <property type="entry name" value="Formate/glycerate dehydrogenase catalytic domain-like"/>
    <property type="match status" value="1"/>
</dbReference>
<dbReference type="SUPFAM" id="SSF51735">
    <property type="entry name" value="NAD(P)-binding Rossmann-fold domains"/>
    <property type="match status" value="1"/>
</dbReference>
<dbReference type="PROSITE" id="PS00738">
    <property type="entry name" value="ADOHCYASE_1"/>
    <property type="match status" value="1"/>
</dbReference>
<dbReference type="PROSITE" id="PS00739">
    <property type="entry name" value="ADOHCYASE_2"/>
    <property type="match status" value="1"/>
</dbReference>
<gene>
    <name evidence="1" type="primary">ahcY</name>
    <name type="ordered locus">BMEI2029</name>
</gene>
<comment type="function">
    <text evidence="1">May play a key role in the regulation of the intracellular concentration of adenosylhomocysteine.</text>
</comment>
<comment type="catalytic activity">
    <reaction evidence="1">
        <text>S-adenosyl-L-homocysteine + H2O = L-homocysteine + adenosine</text>
        <dbReference type="Rhea" id="RHEA:21708"/>
        <dbReference type="ChEBI" id="CHEBI:15377"/>
        <dbReference type="ChEBI" id="CHEBI:16335"/>
        <dbReference type="ChEBI" id="CHEBI:57856"/>
        <dbReference type="ChEBI" id="CHEBI:58199"/>
        <dbReference type="EC" id="3.13.2.1"/>
    </reaction>
</comment>
<comment type="cofactor">
    <cofactor evidence="1">
        <name>NAD(+)</name>
        <dbReference type="ChEBI" id="CHEBI:57540"/>
    </cofactor>
    <text evidence="1">Binds 1 NAD(+) per subunit.</text>
</comment>
<comment type="pathway">
    <text evidence="1">Amino-acid biosynthesis; L-homocysteine biosynthesis; L-homocysteine from S-adenosyl-L-homocysteine: step 1/1.</text>
</comment>
<comment type="subcellular location">
    <subcellularLocation>
        <location evidence="1">Cytoplasm</location>
    </subcellularLocation>
</comment>
<comment type="similarity">
    <text evidence="1">Belongs to the adenosylhomocysteinase family.</text>
</comment>
<comment type="sequence caution" evidence="2">
    <conflict type="erroneous initiation">
        <sequence resource="EMBL-CDS" id="AAL53210"/>
    </conflict>
</comment>
<protein>
    <recommendedName>
        <fullName evidence="1">Adenosylhomocysteinase</fullName>
        <ecNumber evidence="1">3.13.2.1</ecNumber>
    </recommendedName>
    <alternativeName>
        <fullName evidence="1">S-adenosyl-L-homocysteine hydrolase</fullName>
        <shortName evidence="1">AdoHcyase</shortName>
    </alternativeName>
</protein>